<accession>B4SKX8</accession>
<dbReference type="EMBL" id="CP001111">
    <property type="protein sequence ID" value="ACF50476.1"/>
    <property type="molecule type" value="Genomic_DNA"/>
</dbReference>
<dbReference type="RefSeq" id="WP_004145389.1">
    <property type="nucleotide sequence ID" value="NC_011071.1"/>
</dbReference>
<dbReference type="SMR" id="B4SKX8"/>
<dbReference type="STRING" id="391008.Smal_0771"/>
<dbReference type="KEGG" id="smt:Smal_0771"/>
<dbReference type="eggNOG" id="COG0097">
    <property type="taxonomic scope" value="Bacteria"/>
</dbReference>
<dbReference type="HOGENOM" id="CLU_065464_1_2_6"/>
<dbReference type="OrthoDB" id="9805007at2"/>
<dbReference type="Proteomes" id="UP000001867">
    <property type="component" value="Chromosome"/>
</dbReference>
<dbReference type="GO" id="GO:0022625">
    <property type="term" value="C:cytosolic large ribosomal subunit"/>
    <property type="evidence" value="ECO:0007669"/>
    <property type="project" value="TreeGrafter"/>
</dbReference>
<dbReference type="GO" id="GO:0019843">
    <property type="term" value="F:rRNA binding"/>
    <property type="evidence" value="ECO:0007669"/>
    <property type="project" value="UniProtKB-UniRule"/>
</dbReference>
<dbReference type="GO" id="GO:0003735">
    <property type="term" value="F:structural constituent of ribosome"/>
    <property type="evidence" value="ECO:0007669"/>
    <property type="project" value="InterPro"/>
</dbReference>
<dbReference type="GO" id="GO:0002181">
    <property type="term" value="P:cytoplasmic translation"/>
    <property type="evidence" value="ECO:0007669"/>
    <property type="project" value="TreeGrafter"/>
</dbReference>
<dbReference type="FunFam" id="3.90.930.12:FF:000001">
    <property type="entry name" value="50S ribosomal protein L6"/>
    <property type="match status" value="1"/>
</dbReference>
<dbReference type="Gene3D" id="3.90.930.12">
    <property type="entry name" value="Ribosomal protein L6, alpha-beta domain"/>
    <property type="match status" value="2"/>
</dbReference>
<dbReference type="HAMAP" id="MF_01365_B">
    <property type="entry name" value="Ribosomal_uL6_B"/>
    <property type="match status" value="1"/>
</dbReference>
<dbReference type="InterPro" id="IPR000702">
    <property type="entry name" value="Ribosomal_uL6-like"/>
</dbReference>
<dbReference type="InterPro" id="IPR036789">
    <property type="entry name" value="Ribosomal_uL6-like_a/b-dom_sf"/>
</dbReference>
<dbReference type="InterPro" id="IPR020040">
    <property type="entry name" value="Ribosomal_uL6_a/b-dom"/>
</dbReference>
<dbReference type="InterPro" id="IPR019906">
    <property type="entry name" value="Ribosomal_uL6_bac-type"/>
</dbReference>
<dbReference type="InterPro" id="IPR002358">
    <property type="entry name" value="Ribosomal_uL6_CS"/>
</dbReference>
<dbReference type="NCBIfam" id="TIGR03654">
    <property type="entry name" value="L6_bact"/>
    <property type="match status" value="1"/>
</dbReference>
<dbReference type="PANTHER" id="PTHR11655">
    <property type="entry name" value="60S/50S RIBOSOMAL PROTEIN L6/L9"/>
    <property type="match status" value="1"/>
</dbReference>
<dbReference type="PANTHER" id="PTHR11655:SF14">
    <property type="entry name" value="LARGE RIBOSOMAL SUBUNIT PROTEIN UL6M"/>
    <property type="match status" value="1"/>
</dbReference>
<dbReference type="Pfam" id="PF00347">
    <property type="entry name" value="Ribosomal_L6"/>
    <property type="match status" value="2"/>
</dbReference>
<dbReference type="PIRSF" id="PIRSF002162">
    <property type="entry name" value="Ribosomal_L6"/>
    <property type="match status" value="1"/>
</dbReference>
<dbReference type="PRINTS" id="PR00059">
    <property type="entry name" value="RIBOSOMALL6"/>
</dbReference>
<dbReference type="SUPFAM" id="SSF56053">
    <property type="entry name" value="Ribosomal protein L6"/>
    <property type="match status" value="2"/>
</dbReference>
<dbReference type="PROSITE" id="PS00525">
    <property type="entry name" value="RIBOSOMAL_L6_1"/>
    <property type="match status" value="1"/>
</dbReference>
<sequence>MSRVAKKPIDLGKVELNVQNDNVTAKGPKGTLSLAKPAGIAINVENGVATLSTESVDLIPLTGTVRAILSNMVKGVSEGFERKLELVGVGYRAAMQGKDLSLSLGFSHPIVFVAPEGITITTPTQTEILVQGADKQVVGEVAAKIRAFRKPEPYKGKGVKYSDEVIIRKEAKKA</sequence>
<proteinExistence type="inferred from homology"/>
<gene>
    <name evidence="1" type="primary">rplF</name>
    <name type="ordered locus">Smal_0771</name>
</gene>
<name>RL6_STRM5</name>
<comment type="function">
    <text evidence="1">This protein binds to the 23S rRNA, and is important in its secondary structure. It is located near the subunit interface in the base of the L7/L12 stalk, and near the tRNA binding site of the peptidyltransferase center.</text>
</comment>
<comment type="subunit">
    <text evidence="1">Part of the 50S ribosomal subunit.</text>
</comment>
<comment type="similarity">
    <text evidence="1">Belongs to the universal ribosomal protein uL6 family.</text>
</comment>
<feature type="chain" id="PRO_1000144053" description="Large ribosomal subunit protein uL6">
    <location>
        <begin position="1"/>
        <end position="174"/>
    </location>
</feature>
<protein>
    <recommendedName>
        <fullName evidence="1">Large ribosomal subunit protein uL6</fullName>
    </recommendedName>
    <alternativeName>
        <fullName evidence="2">50S ribosomal protein L6</fullName>
    </alternativeName>
</protein>
<reference key="1">
    <citation type="submission" date="2008-06" db="EMBL/GenBank/DDBJ databases">
        <title>Complete sequence of Stenotrophomonas maltophilia R551-3.</title>
        <authorList>
            <consortium name="US DOE Joint Genome Institute"/>
            <person name="Lucas S."/>
            <person name="Copeland A."/>
            <person name="Lapidus A."/>
            <person name="Glavina del Rio T."/>
            <person name="Dalin E."/>
            <person name="Tice H."/>
            <person name="Pitluck S."/>
            <person name="Chain P."/>
            <person name="Malfatti S."/>
            <person name="Shin M."/>
            <person name="Vergez L."/>
            <person name="Lang D."/>
            <person name="Schmutz J."/>
            <person name="Larimer F."/>
            <person name="Land M."/>
            <person name="Hauser L."/>
            <person name="Kyrpides N."/>
            <person name="Mikhailova N."/>
            <person name="Taghavi S."/>
            <person name="Monchy S."/>
            <person name="Newman L."/>
            <person name="Vangronsveld J."/>
            <person name="van der Lelie D."/>
            <person name="Richardson P."/>
        </authorList>
    </citation>
    <scope>NUCLEOTIDE SEQUENCE [LARGE SCALE GENOMIC DNA]</scope>
    <source>
        <strain>R551-3</strain>
    </source>
</reference>
<organism>
    <name type="scientific">Stenotrophomonas maltophilia (strain R551-3)</name>
    <dbReference type="NCBI Taxonomy" id="391008"/>
    <lineage>
        <taxon>Bacteria</taxon>
        <taxon>Pseudomonadati</taxon>
        <taxon>Pseudomonadota</taxon>
        <taxon>Gammaproteobacteria</taxon>
        <taxon>Lysobacterales</taxon>
        <taxon>Lysobacteraceae</taxon>
        <taxon>Stenotrophomonas</taxon>
        <taxon>Stenotrophomonas maltophilia group</taxon>
    </lineage>
</organism>
<evidence type="ECO:0000255" key="1">
    <source>
        <dbReference type="HAMAP-Rule" id="MF_01365"/>
    </source>
</evidence>
<evidence type="ECO:0000305" key="2"/>
<keyword id="KW-0687">Ribonucleoprotein</keyword>
<keyword id="KW-0689">Ribosomal protein</keyword>
<keyword id="KW-0694">RNA-binding</keyword>
<keyword id="KW-0699">rRNA-binding</keyword>